<keyword id="KW-0342">GTP-binding</keyword>
<keyword id="KW-0496">Mitochondrion</keyword>
<keyword id="KW-0547">Nucleotide-binding</keyword>
<keyword id="KW-0648">Protein biosynthesis</keyword>
<keyword id="KW-1185">Reference proteome</keyword>
<keyword id="KW-0809">Transit peptide</keyword>
<name>RRF2M_LODEL</name>
<sequence length="826" mass="92269">MIVRNLLGKNRLCCLQPKLLLSTLSQRPQLQLSLQLLCRATRLYATVNDIALPKTRNIGIIAHIDAGKTTTTERMIYYSGKSKRIGNVDEGDTVTDYLQAERERGITIQLAAITIPWNNHKINIIDTPGHADFTFEVIRSLRVLDGAVTILDAVAGVEAQTEKVWKQASALKLPRMIYVNKMDRPGAGFSRTVKEVIQKLETRVVLCNTPFFENQELNPEFRGVIDVIHGKLLKWKEADEFGKEIDVEDIDETKPELYDVYCKAREYMVETLGEYDESIIDAFLENDENYLKISPELLNRAIRKATIDNYLVPVFCGASFRNIGVQPLMDGITNYLPSPLETPVPDIKSKKKQEISAKMANNGLIINNDPKLTVGLVFKVMNHATRGPMAFVRIYSGKLVANSMVVNSRTGAKHSVRKLLIMHGDQPEEVKFIGAGNIGVISGFEDEFHTGDTVISHATSKKAVGTMESTIKLMPIDIPPPLFNSSIEPFTAGDEAHMKKCIDILIREDPSLKVHTEEDMGQTILSGMGELHLEIVRDRLINDMKVKANLRDIAVAYKESYIGKTPTNGLFETESIQVKLSIEHVDDCKSFEDVDGAIIFEDQNNVIIVPESLASETVQSATEGRRWKCPSSYEELHEAVVNGCSMALQTGGPHLGLSLHSTLVKVEFWNAPVEVNEELIPPLMNAAREAVQSVKASENKFGFLEPLMNVRVFVDSADMGEVSHDLSQRCQALIHSVEDESLLNLETANWAKDEAERAYLPPDYTMSKTALADNYKTRKVIHAETPLKEMIGYLSKLRSLTGGKATFDMSFLGMRRVTQSRLNQIF</sequence>
<organism>
    <name type="scientific">Lodderomyces elongisporus (strain ATCC 11503 / CBS 2605 / JCM 1781 / NBRC 1676 / NRRL YB-4239)</name>
    <name type="common">Yeast</name>
    <name type="synonym">Saccharomyces elongisporus</name>
    <dbReference type="NCBI Taxonomy" id="379508"/>
    <lineage>
        <taxon>Eukaryota</taxon>
        <taxon>Fungi</taxon>
        <taxon>Dikarya</taxon>
        <taxon>Ascomycota</taxon>
        <taxon>Saccharomycotina</taxon>
        <taxon>Pichiomycetes</taxon>
        <taxon>Debaryomycetaceae</taxon>
        <taxon>Candida/Lodderomyces clade</taxon>
        <taxon>Lodderomyces</taxon>
    </lineage>
</organism>
<feature type="transit peptide" description="Mitochondrion" evidence="1">
    <location>
        <begin position="1"/>
        <end position="44"/>
    </location>
</feature>
<feature type="chain" id="PRO_0000385617" description="Ribosome-releasing factor 2, mitochondrial">
    <location>
        <begin position="45"/>
        <end position="826"/>
    </location>
</feature>
<feature type="domain" description="tr-type G">
    <location>
        <begin position="53"/>
        <end position="340"/>
    </location>
</feature>
<feature type="binding site" evidence="1">
    <location>
        <begin position="62"/>
        <end position="69"/>
    </location>
    <ligand>
        <name>GTP</name>
        <dbReference type="ChEBI" id="CHEBI:37565"/>
    </ligand>
</feature>
<feature type="binding site" evidence="1">
    <location>
        <begin position="126"/>
        <end position="130"/>
    </location>
    <ligand>
        <name>GTP</name>
        <dbReference type="ChEBI" id="CHEBI:37565"/>
    </ligand>
</feature>
<feature type="binding site" evidence="1">
    <location>
        <begin position="180"/>
        <end position="183"/>
    </location>
    <ligand>
        <name>GTP</name>
        <dbReference type="ChEBI" id="CHEBI:37565"/>
    </ligand>
</feature>
<dbReference type="EMBL" id="CH981524">
    <property type="protein sequence ID" value="EDK42636.1"/>
    <property type="molecule type" value="Genomic_DNA"/>
</dbReference>
<dbReference type="RefSeq" id="XP_001528294.1">
    <property type="nucleotide sequence ID" value="XM_001528244.1"/>
</dbReference>
<dbReference type="SMR" id="A5DTX8"/>
<dbReference type="FunCoup" id="A5DTX8">
    <property type="interactions" value="567"/>
</dbReference>
<dbReference type="STRING" id="379508.A5DTX8"/>
<dbReference type="GeneID" id="5234768"/>
<dbReference type="KEGG" id="lel:PVL30_000783"/>
<dbReference type="VEuPathDB" id="FungiDB:LELG_00814"/>
<dbReference type="eggNOG" id="KOG0465">
    <property type="taxonomic scope" value="Eukaryota"/>
</dbReference>
<dbReference type="HOGENOM" id="CLU_002794_4_1_1"/>
<dbReference type="InParanoid" id="A5DTX8"/>
<dbReference type="OMA" id="GPQFTFP"/>
<dbReference type="OrthoDB" id="198619at2759"/>
<dbReference type="Proteomes" id="UP000001996">
    <property type="component" value="Unassembled WGS sequence"/>
</dbReference>
<dbReference type="GO" id="GO:0005739">
    <property type="term" value="C:mitochondrion"/>
    <property type="evidence" value="ECO:0007669"/>
    <property type="project" value="UniProtKB-SubCell"/>
</dbReference>
<dbReference type="GO" id="GO:0005525">
    <property type="term" value="F:GTP binding"/>
    <property type="evidence" value="ECO:0007669"/>
    <property type="project" value="UniProtKB-UniRule"/>
</dbReference>
<dbReference type="GO" id="GO:0003924">
    <property type="term" value="F:GTPase activity"/>
    <property type="evidence" value="ECO:0007669"/>
    <property type="project" value="UniProtKB-UniRule"/>
</dbReference>
<dbReference type="GO" id="GO:0000002">
    <property type="term" value="P:mitochondrial genome maintenance"/>
    <property type="evidence" value="ECO:0007669"/>
    <property type="project" value="EnsemblFungi"/>
</dbReference>
<dbReference type="GO" id="GO:0032543">
    <property type="term" value="P:mitochondrial translation"/>
    <property type="evidence" value="ECO:0007669"/>
    <property type="project" value="UniProtKB-UniRule"/>
</dbReference>
<dbReference type="GO" id="GO:0051881">
    <property type="term" value="P:regulation of mitochondrial membrane potential"/>
    <property type="evidence" value="ECO:0007669"/>
    <property type="project" value="EnsemblFungi"/>
</dbReference>
<dbReference type="GO" id="GO:0032790">
    <property type="term" value="P:ribosome disassembly"/>
    <property type="evidence" value="ECO:0007669"/>
    <property type="project" value="UniProtKB-UniRule"/>
</dbReference>
<dbReference type="CDD" id="cd01886">
    <property type="entry name" value="EF-G"/>
    <property type="match status" value="1"/>
</dbReference>
<dbReference type="CDD" id="cd16262">
    <property type="entry name" value="EFG_III"/>
    <property type="match status" value="1"/>
</dbReference>
<dbReference type="CDD" id="cd03713">
    <property type="entry name" value="EFG_mtEFG_C"/>
    <property type="match status" value="1"/>
</dbReference>
<dbReference type="FunFam" id="3.40.50.300:FF:001636">
    <property type="entry name" value="Ribosome-releasing factor 2, mitochondrial"/>
    <property type="match status" value="1"/>
</dbReference>
<dbReference type="Gene3D" id="3.30.70.240">
    <property type="match status" value="1"/>
</dbReference>
<dbReference type="Gene3D" id="3.30.70.870">
    <property type="entry name" value="Elongation Factor G (Translational Gtpase), domain 3"/>
    <property type="match status" value="1"/>
</dbReference>
<dbReference type="Gene3D" id="3.40.50.300">
    <property type="entry name" value="P-loop containing nucleotide triphosphate hydrolases"/>
    <property type="match status" value="1"/>
</dbReference>
<dbReference type="Gene3D" id="2.40.30.10">
    <property type="entry name" value="Translation factors"/>
    <property type="match status" value="1"/>
</dbReference>
<dbReference type="HAMAP" id="MF_03059">
    <property type="entry name" value="mEF_G_2"/>
    <property type="match status" value="1"/>
</dbReference>
<dbReference type="InterPro" id="IPR053905">
    <property type="entry name" value="EF-G-like_DII"/>
</dbReference>
<dbReference type="InterPro" id="IPR030851">
    <property type="entry name" value="EFG2"/>
</dbReference>
<dbReference type="InterPro" id="IPR041095">
    <property type="entry name" value="EFG_II"/>
</dbReference>
<dbReference type="InterPro" id="IPR009022">
    <property type="entry name" value="EFG_III"/>
</dbReference>
<dbReference type="InterPro" id="IPR035647">
    <property type="entry name" value="EFG_III/V"/>
</dbReference>
<dbReference type="InterPro" id="IPR035649">
    <property type="entry name" value="EFG_V"/>
</dbReference>
<dbReference type="InterPro" id="IPR000640">
    <property type="entry name" value="EFG_V-like"/>
</dbReference>
<dbReference type="InterPro" id="IPR031157">
    <property type="entry name" value="G_TR_CS"/>
</dbReference>
<dbReference type="InterPro" id="IPR027417">
    <property type="entry name" value="P-loop_NTPase"/>
</dbReference>
<dbReference type="InterPro" id="IPR005225">
    <property type="entry name" value="Small_GTP-bd"/>
</dbReference>
<dbReference type="InterPro" id="IPR000795">
    <property type="entry name" value="T_Tr_GTP-bd_dom"/>
</dbReference>
<dbReference type="InterPro" id="IPR009000">
    <property type="entry name" value="Transl_B-barrel_sf"/>
</dbReference>
<dbReference type="NCBIfam" id="TIGR00231">
    <property type="entry name" value="small_GTP"/>
    <property type="match status" value="1"/>
</dbReference>
<dbReference type="PANTHER" id="PTHR43261:SF1">
    <property type="entry name" value="RIBOSOME-RELEASING FACTOR 2, MITOCHONDRIAL"/>
    <property type="match status" value="1"/>
</dbReference>
<dbReference type="PANTHER" id="PTHR43261">
    <property type="entry name" value="TRANSLATION ELONGATION FACTOR G-RELATED"/>
    <property type="match status" value="1"/>
</dbReference>
<dbReference type="Pfam" id="PF22042">
    <property type="entry name" value="EF-G_D2"/>
    <property type="match status" value="1"/>
</dbReference>
<dbReference type="Pfam" id="PF00679">
    <property type="entry name" value="EFG_C"/>
    <property type="match status" value="1"/>
</dbReference>
<dbReference type="Pfam" id="PF14492">
    <property type="entry name" value="EFG_III"/>
    <property type="match status" value="1"/>
</dbReference>
<dbReference type="Pfam" id="PF00009">
    <property type="entry name" value="GTP_EFTU"/>
    <property type="match status" value="1"/>
</dbReference>
<dbReference type="PRINTS" id="PR00315">
    <property type="entry name" value="ELONGATNFCT"/>
</dbReference>
<dbReference type="SMART" id="SM00838">
    <property type="entry name" value="EFG_C"/>
    <property type="match status" value="1"/>
</dbReference>
<dbReference type="SUPFAM" id="SSF54980">
    <property type="entry name" value="EF-G C-terminal domain-like"/>
    <property type="match status" value="2"/>
</dbReference>
<dbReference type="SUPFAM" id="SSF52540">
    <property type="entry name" value="P-loop containing nucleoside triphosphate hydrolases"/>
    <property type="match status" value="1"/>
</dbReference>
<dbReference type="SUPFAM" id="SSF50447">
    <property type="entry name" value="Translation proteins"/>
    <property type="match status" value="1"/>
</dbReference>
<dbReference type="PROSITE" id="PS00301">
    <property type="entry name" value="G_TR_1"/>
    <property type="match status" value="1"/>
</dbReference>
<dbReference type="PROSITE" id="PS51722">
    <property type="entry name" value="G_TR_2"/>
    <property type="match status" value="1"/>
</dbReference>
<comment type="function">
    <text evidence="1">Mitochondrial GTPase that mediates the disassembly of ribosomes from messenger RNA at the termination of mitochondrial protein biosynthesis. Not involved in the GTP-dependent ribosomal translocation step during translation elongation.</text>
</comment>
<comment type="subcellular location">
    <subcellularLocation>
        <location evidence="1">Mitochondrion</location>
    </subcellularLocation>
</comment>
<comment type="similarity">
    <text evidence="1">Belongs to the TRAFAC class translation factor GTPase superfamily. Classic translation factor GTPase family. EF-G/EF-2 subfamily.</text>
</comment>
<proteinExistence type="inferred from homology"/>
<evidence type="ECO:0000255" key="1">
    <source>
        <dbReference type="HAMAP-Rule" id="MF_03059"/>
    </source>
</evidence>
<reference key="1">
    <citation type="journal article" date="2009" name="Nature">
        <title>Evolution of pathogenicity and sexual reproduction in eight Candida genomes.</title>
        <authorList>
            <person name="Butler G."/>
            <person name="Rasmussen M.D."/>
            <person name="Lin M.F."/>
            <person name="Santos M.A.S."/>
            <person name="Sakthikumar S."/>
            <person name="Munro C.A."/>
            <person name="Rheinbay E."/>
            <person name="Grabherr M."/>
            <person name="Forche A."/>
            <person name="Reedy J.L."/>
            <person name="Agrafioti I."/>
            <person name="Arnaud M.B."/>
            <person name="Bates S."/>
            <person name="Brown A.J.P."/>
            <person name="Brunke S."/>
            <person name="Costanzo M.C."/>
            <person name="Fitzpatrick D.A."/>
            <person name="de Groot P.W.J."/>
            <person name="Harris D."/>
            <person name="Hoyer L.L."/>
            <person name="Hube B."/>
            <person name="Klis F.M."/>
            <person name="Kodira C."/>
            <person name="Lennard N."/>
            <person name="Logue M.E."/>
            <person name="Martin R."/>
            <person name="Neiman A.M."/>
            <person name="Nikolaou E."/>
            <person name="Quail M.A."/>
            <person name="Quinn J."/>
            <person name="Santos M.C."/>
            <person name="Schmitzberger F.F."/>
            <person name="Sherlock G."/>
            <person name="Shah P."/>
            <person name="Silverstein K.A.T."/>
            <person name="Skrzypek M.S."/>
            <person name="Soll D."/>
            <person name="Staggs R."/>
            <person name="Stansfield I."/>
            <person name="Stumpf M.P.H."/>
            <person name="Sudbery P.E."/>
            <person name="Srikantha T."/>
            <person name="Zeng Q."/>
            <person name="Berman J."/>
            <person name="Berriman M."/>
            <person name="Heitman J."/>
            <person name="Gow N.A.R."/>
            <person name="Lorenz M.C."/>
            <person name="Birren B.W."/>
            <person name="Kellis M."/>
            <person name="Cuomo C.A."/>
        </authorList>
    </citation>
    <scope>NUCLEOTIDE SEQUENCE [LARGE SCALE GENOMIC DNA]</scope>
    <source>
        <strain>ATCC 11503 / BCRC 21390 / CBS 2605 / JCM 1781 / NBRC 1676 / NRRL YB-4239</strain>
    </source>
</reference>
<protein>
    <recommendedName>
        <fullName evidence="1">Ribosome-releasing factor 2, mitochondrial</fullName>
        <shortName evidence="1">RRF2mt</shortName>
    </recommendedName>
    <alternativeName>
        <fullName evidence="1">Elongation factor G 2, mitochondrial</fullName>
        <shortName evidence="1">EF-G2mt</shortName>
        <shortName evidence="1">mEF-G 2</shortName>
    </alternativeName>
</protein>
<accession>A5DTX8</accession>
<gene>
    <name evidence="1" type="primary">MEF2</name>
    <name type="ORF">LELG_00814</name>
</gene>